<accession>A8FFW6</accession>
<protein>
    <recommendedName>
        <fullName evidence="1">Ketol-acid reductoisomerase (NADP(+))</fullName>
        <shortName evidence="1">KARI</shortName>
        <ecNumber evidence="1">1.1.1.86</ecNumber>
    </recommendedName>
    <alternativeName>
        <fullName evidence="1">Acetohydroxy-acid isomeroreductase</fullName>
        <shortName evidence="1">AHIR</shortName>
    </alternativeName>
    <alternativeName>
        <fullName evidence="1">Alpha-keto-beta-hydroxylacyl reductoisomerase</fullName>
    </alternativeName>
    <alternativeName>
        <fullName evidence="1">Ketol-acid reductoisomerase type 1</fullName>
    </alternativeName>
    <alternativeName>
        <fullName evidence="1">Ketol-acid reductoisomerase type I</fullName>
    </alternativeName>
</protein>
<sequence>MVKVYYNGDIQENVLNGQKVAIIGYGSQGHAHALNLKESGVDVIVGVRKGGSYTKAQEDGHQVFTVKEAAAQADVLMVLLPDEQQKKVYDEEIKDQLEAGNSLVFAHGFNVHFHQIVPPSDVDVYLVAPKGPGHLVRRTYEQGAGVPALFAIYQDVSGQAKDKALAYAKAIGGARAGVLETTFKEETETDLFGEQAVLCGGLTSLVKAGFETLTEAGYQPELAYFECLHELKLIVDLMYEEGLEGMRYSISDTAQWGDFVSGPRVVDANVKESMKAVLTDIQNGTFAKEWIVENQVNRPRFNAINANENEHQIEVVGRKLREMMPFVKQGKKKEAVSVGAEN</sequence>
<evidence type="ECO:0000255" key="1">
    <source>
        <dbReference type="HAMAP-Rule" id="MF_00435"/>
    </source>
</evidence>
<evidence type="ECO:0000255" key="2">
    <source>
        <dbReference type="PROSITE-ProRule" id="PRU01197"/>
    </source>
</evidence>
<evidence type="ECO:0000255" key="3">
    <source>
        <dbReference type="PROSITE-ProRule" id="PRU01198"/>
    </source>
</evidence>
<comment type="function">
    <text evidence="1">Involved in the biosynthesis of branched-chain amino acids (BCAA). Catalyzes an alkyl-migration followed by a ketol-acid reduction of (S)-2-acetolactate (S2AL) to yield (R)-2,3-dihydroxy-isovalerate. In the isomerase reaction, S2AL is rearranged via a Mg-dependent methyl migration to produce 3-hydroxy-3-methyl-2-ketobutyrate (HMKB). In the reductase reaction, this 2-ketoacid undergoes a metal-dependent reduction by NADPH to yield (R)-2,3-dihydroxy-isovalerate.</text>
</comment>
<comment type="catalytic activity">
    <reaction evidence="1">
        <text>(2R)-2,3-dihydroxy-3-methylbutanoate + NADP(+) = (2S)-2-acetolactate + NADPH + H(+)</text>
        <dbReference type="Rhea" id="RHEA:22068"/>
        <dbReference type="ChEBI" id="CHEBI:15378"/>
        <dbReference type="ChEBI" id="CHEBI:49072"/>
        <dbReference type="ChEBI" id="CHEBI:57783"/>
        <dbReference type="ChEBI" id="CHEBI:58349"/>
        <dbReference type="ChEBI" id="CHEBI:58476"/>
        <dbReference type="EC" id="1.1.1.86"/>
    </reaction>
</comment>
<comment type="catalytic activity">
    <reaction evidence="1">
        <text>(2R,3R)-2,3-dihydroxy-3-methylpentanoate + NADP(+) = (S)-2-ethyl-2-hydroxy-3-oxobutanoate + NADPH + H(+)</text>
        <dbReference type="Rhea" id="RHEA:13493"/>
        <dbReference type="ChEBI" id="CHEBI:15378"/>
        <dbReference type="ChEBI" id="CHEBI:49256"/>
        <dbReference type="ChEBI" id="CHEBI:49258"/>
        <dbReference type="ChEBI" id="CHEBI:57783"/>
        <dbReference type="ChEBI" id="CHEBI:58349"/>
        <dbReference type="EC" id="1.1.1.86"/>
    </reaction>
</comment>
<comment type="cofactor">
    <cofactor evidence="1">
        <name>Mg(2+)</name>
        <dbReference type="ChEBI" id="CHEBI:18420"/>
    </cofactor>
    <text evidence="1">Binds 2 magnesium ions per subunit.</text>
</comment>
<comment type="pathway">
    <text evidence="1">Amino-acid biosynthesis; L-isoleucine biosynthesis; L-isoleucine from 2-oxobutanoate: step 2/4.</text>
</comment>
<comment type="pathway">
    <text evidence="1">Amino-acid biosynthesis; L-valine biosynthesis; L-valine from pyruvate: step 2/4.</text>
</comment>
<comment type="similarity">
    <text evidence="1">Belongs to the ketol-acid reductoisomerase family.</text>
</comment>
<proteinExistence type="inferred from homology"/>
<gene>
    <name evidence="1" type="primary">ilvC</name>
    <name type="ordered locus">BPUM_2470</name>
</gene>
<organism>
    <name type="scientific">Bacillus pumilus (strain SAFR-032)</name>
    <dbReference type="NCBI Taxonomy" id="315750"/>
    <lineage>
        <taxon>Bacteria</taxon>
        <taxon>Bacillati</taxon>
        <taxon>Bacillota</taxon>
        <taxon>Bacilli</taxon>
        <taxon>Bacillales</taxon>
        <taxon>Bacillaceae</taxon>
        <taxon>Bacillus</taxon>
    </lineage>
</organism>
<feature type="chain" id="PRO_1000060226" description="Ketol-acid reductoisomerase (NADP(+))">
    <location>
        <begin position="1"/>
        <end position="342"/>
    </location>
</feature>
<feature type="domain" description="KARI N-terminal Rossmann" evidence="2">
    <location>
        <begin position="2"/>
        <end position="181"/>
    </location>
</feature>
<feature type="domain" description="KARI C-terminal knotted" evidence="3">
    <location>
        <begin position="182"/>
        <end position="327"/>
    </location>
</feature>
<feature type="active site" evidence="1">
    <location>
        <position position="107"/>
    </location>
</feature>
<feature type="binding site" evidence="1">
    <location>
        <begin position="25"/>
        <end position="28"/>
    </location>
    <ligand>
        <name>NADP(+)</name>
        <dbReference type="ChEBI" id="CHEBI:58349"/>
    </ligand>
</feature>
<feature type="binding site" evidence="1">
    <location>
        <position position="48"/>
    </location>
    <ligand>
        <name>NADP(+)</name>
        <dbReference type="ChEBI" id="CHEBI:58349"/>
    </ligand>
</feature>
<feature type="binding site" evidence="1">
    <location>
        <position position="52"/>
    </location>
    <ligand>
        <name>NADP(+)</name>
        <dbReference type="ChEBI" id="CHEBI:58349"/>
    </ligand>
</feature>
<feature type="binding site" evidence="1">
    <location>
        <begin position="82"/>
        <end position="85"/>
    </location>
    <ligand>
        <name>NADP(+)</name>
        <dbReference type="ChEBI" id="CHEBI:58349"/>
    </ligand>
</feature>
<feature type="binding site" evidence="1">
    <location>
        <position position="133"/>
    </location>
    <ligand>
        <name>NADP(+)</name>
        <dbReference type="ChEBI" id="CHEBI:58349"/>
    </ligand>
</feature>
<feature type="binding site" evidence="1">
    <location>
        <position position="190"/>
    </location>
    <ligand>
        <name>Mg(2+)</name>
        <dbReference type="ChEBI" id="CHEBI:18420"/>
        <label>1</label>
    </ligand>
</feature>
<feature type="binding site" evidence="1">
    <location>
        <position position="190"/>
    </location>
    <ligand>
        <name>Mg(2+)</name>
        <dbReference type="ChEBI" id="CHEBI:18420"/>
        <label>2</label>
    </ligand>
</feature>
<feature type="binding site" evidence="1">
    <location>
        <position position="194"/>
    </location>
    <ligand>
        <name>Mg(2+)</name>
        <dbReference type="ChEBI" id="CHEBI:18420"/>
        <label>1</label>
    </ligand>
</feature>
<feature type="binding site" evidence="1">
    <location>
        <position position="226"/>
    </location>
    <ligand>
        <name>Mg(2+)</name>
        <dbReference type="ChEBI" id="CHEBI:18420"/>
        <label>2</label>
    </ligand>
</feature>
<feature type="binding site" evidence="1">
    <location>
        <position position="230"/>
    </location>
    <ligand>
        <name>Mg(2+)</name>
        <dbReference type="ChEBI" id="CHEBI:18420"/>
        <label>2</label>
    </ligand>
</feature>
<feature type="binding site" evidence="1">
    <location>
        <position position="251"/>
    </location>
    <ligand>
        <name>substrate</name>
    </ligand>
</feature>
<keyword id="KW-0028">Amino-acid biosynthesis</keyword>
<keyword id="KW-0100">Branched-chain amino acid biosynthesis</keyword>
<keyword id="KW-0460">Magnesium</keyword>
<keyword id="KW-0479">Metal-binding</keyword>
<keyword id="KW-0521">NADP</keyword>
<keyword id="KW-0560">Oxidoreductase</keyword>
<dbReference type="EC" id="1.1.1.86" evidence="1"/>
<dbReference type="EMBL" id="CP000813">
    <property type="protein sequence ID" value="ABV63133.1"/>
    <property type="molecule type" value="Genomic_DNA"/>
</dbReference>
<dbReference type="RefSeq" id="WP_012010791.1">
    <property type="nucleotide sequence ID" value="NZ_VEIS01000010.1"/>
</dbReference>
<dbReference type="SMR" id="A8FFW6"/>
<dbReference type="STRING" id="315750.BPUM_2470"/>
<dbReference type="GeneID" id="5621734"/>
<dbReference type="KEGG" id="bpu:BPUM_2470"/>
<dbReference type="eggNOG" id="COG0059">
    <property type="taxonomic scope" value="Bacteria"/>
</dbReference>
<dbReference type="HOGENOM" id="CLU_033821_0_1_9"/>
<dbReference type="OrthoDB" id="9804088at2"/>
<dbReference type="UniPathway" id="UPA00047">
    <property type="reaction ID" value="UER00056"/>
</dbReference>
<dbReference type="UniPathway" id="UPA00049">
    <property type="reaction ID" value="UER00060"/>
</dbReference>
<dbReference type="Proteomes" id="UP000001355">
    <property type="component" value="Chromosome"/>
</dbReference>
<dbReference type="GO" id="GO:0005829">
    <property type="term" value="C:cytosol"/>
    <property type="evidence" value="ECO:0007669"/>
    <property type="project" value="TreeGrafter"/>
</dbReference>
<dbReference type="GO" id="GO:0004455">
    <property type="term" value="F:ketol-acid reductoisomerase activity"/>
    <property type="evidence" value="ECO:0007669"/>
    <property type="project" value="UniProtKB-UniRule"/>
</dbReference>
<dbReference type="GO" id="GO:0000287">
    <property type="term" value="F:magnesium ion binding"/>
    <property type="evidence" value="ECO:0007669"/>
    <property type="project" value="UniProtKB-UniRule"/>
</dbReference>
<dbReference type="GO" id="GO:0050661">
    <property type="term" value="F:NADP binding"/>
    <property type="evidence" value="ECO:0007669"/>
    <property type="project" value="InterPro"/>
</dbReference>
<dbReference type="GO" id="GO:0009097">
    <property type="term" value="P:isoleucine biosynthetic process"/>
    <property type="evidence" value="ECO:0007669"/>
    <property type="project" value="UniProtKB-UniRule"/>
</dbReference>
<dbReference type="GO" id="GO:0009099">
    <property type="term" value="P:L-valine biosynthetic process"/>
    <property type="evidence" value="ECO:0007669"/>
    <property type="project" value="UniProtKB-UniRule"/>
</dbReference>
<dbReference type="FunFam" id="3.40.50.720:FF:000023">
    <property type="entry name" value="Ketol-acid reductoisomerase (NADP(+))"/>
    <property type="match status" value="1"/>
</dbReference>
<dbReference type="Gene3D" id="6.10.240.10">
    <property type="match status" value="1"/>
</dbReference>
<dbReference type="Gene3D" id="3.40.50.720">
    <property type="entry name" value="NAD(P)-binding Rossmann-like Domain"/>
    <property type="match status" value="1"/>
</dbReference>
<dbReference type="HAMAP" id="MF_00435">
    <property type="entry name" value="IlvC"/>
    <property type="match status" value="1"/>
</dbReference>
<dbReference type="InterPro" id="IPR008927">
    <property type="entry name" value="6-PGluconate_DH-like_C_sf"/>
</dbReference>
<dbReference type="InterPro" id="IPR013023">
    <property type="entry name" value="KARI"/>
</dbReference>
<dbReference type="InterPro" id="IPR000506">
    <property type="entry name" value="KARI_C"/>
</dbReference>
<dbReference type="InterPro" id="IPR013116">
    <property type="entry name" value="KARI_N"/>
</dbReference>
<dbReference type="InterPro" id="IPR014359">
    <property type="entry name" value="KARI_prok"/>
</dbReference>
<dbReference type="InterPro" id="IPR036291">
    <property type="entry name" value="NAD(P)-bd_dom_sf"/>
</dbReference>
<dbReference type="NCBIfam" id="TIGR00465">
    <property type="entry name" value="ilvC"/>
    <property type="match status" value="1"/>
</dbReference>
<dbReference type="NCBIfam" id="NF004017">
    <property type="entry name" value="PRK05479.1"/>
    <property type="match status" value="1"/>
</dbReference>
<dbReference type="NCBIfam" id="NF009940">
    <property type="entry name" value="PRK13403.1"/>
    <property type="match status" value="1"/>
</dbReference>
<dbReference type="PANTHER" id="PTHR21371">
    <property type="entry name" value="KETOL-ACID REDUCTOISOMERASE, MITOCHONDRIAL"/>
    <property type="match status" value="1"/>
</dbReference>
<dbReference type="PANTHER" id="PTHR21371:SF1">
    <property type="entry name" value="KETOL-ACID REDUCTOISOMERASE, MITOCHONDRIAL"/>
    <property type="match status" value="1"/>
</dbReference>
<dbReference type="Pfam" id="PF01450">
    <property type="entry name" value="KARI_C"/>
    <property type="match status" value="1"/>
</dbReference>
<dbReference type="Pfam" id="PF07991">
    <property type="entry name" value="KARI_N"/>
    <property type="match status" value="1"/>
</dbReference>
<dbReference type="PIRSF" id="PIRSF000116">
    <property type="entry name" value="IlvC_gammaproteo"/>
    <property type="match status" value="1"/>
</dbReference>
<dbReference type="SUPFAM" id="SSF48179">
    <property type="entry name" value="6-phosphogluconate dehydrogenase C-terminal domain-like"/>
    <property type="match status" value="1"/>
</dbReference>
<dbReference type="SUPFAM" id="SSF51735">
    <property type="entry name" value="NAD(P)-binding Rossmann-fold domains"/>
    <property type="match status" value="1"/>
</dbReference>
<dbReference type="PROSITE" id="PS51851">
    <property type="entry name" value="KARI_C"/>
    <property type="match status" value="1"/>
</dbReference>
<dbReference type="PROSITE" id="PS51850">
    <property type="entry name" value="KARI_N"/>
    <property type="match status" value="1"/>
</dbReference>
<reference key="1">
    <citation type="journal article" date="2007" name="PLoS ONE">
        <title>Paradoxical DNA repair and peroxide resistance gene conservation in Bacillus pumilus SAFR-032.</title>
        <authorList>
            <person name="Gioia J."/>
            <person name="Yerrapragada S."/>
            <person name="Qin X."/>
            <person name="Jiang H."/>
            <person name="Igboeli O.C."/>
            <person name="Muzny D."/>
            <person name="Dugan-Rocha S."/>
            <person name="Ding Y."/>
            <person name="Hawes A."/>
            <person name="Liu W."/>
            <person name="Perez L."/>
            <person name="Kovar C."/>
            <person name="Dinh H."/>
            <person name="Lee S."/>
            <person name="Nazareth L."/>
            <person name="Blyth P."/>
            <person name="Holder M."/>
            <person name="Buhay C."/>
            <person name="Tirumalai M.R."/>
            <person name="Liu Y."/>
            <person name="Dasgupta I."/>
            <person name="Bokhetache L."/>
            <person name="Fujita M."/>
            <person name="Karouia F."/>
            <person name="Eswara Moorthy P."/>
            <person name="Siefert J."/>
            <person name="Uzman A."/>
            <person name="Buzumbo P."/>
            <person name="Verma A."/>
            <person name="Zwiya H."/>
            <person name="McWilliams B.D."/>
            <person name="Olowu A."/>
            <person name="Clinkenbeard K.D."/>
            <person name="Newcombe D."/>
            <person name="Golebiewski L."/>
            <person name="Petrosino J.F."/>
            <person name="Nicholson W.L."/>
            <person name="Fox G.E."/>
            <person name="Venkateswaran K."/>
            <person name="Highlander S.K."/>
            <person name="Weinstock G.M."/>
        </authorList>
    </citation>
    <scope>NUCLEOTIDE SEQUENCE [LARGE SCALE GENOMIC DNA]</scope>
    <source>
        <strain>SAFR-032</strain>
    </source>
</reference>
<name>ILVC_BACP2</name>